<evidence type="ECO:0000255" key="1">
    <source>
        <dbReference type="HAMAP-Rule" id="MF_01524"/>
    </source>
</evidence>
<evidence type="ECO:0000305" key="2"/>
<reference key="1">
    <citation type="journal article" date="2006" name="Mol. Microbiol.">
        <title>Role of pathogenicity island-associated integrases in the genome plasticity of uropathogenic Escherichia coli strain 536.</title>
        <authorList>
            <person name="Hochhut B."/>
            <person name="Wilde C."/>
            <person name="Balling G."/>
            <person name="Middendorf B."/>
            <person name="Dobrindt U."/>
            <person name="Brzuszkiewicz E."/>
            <person name="Gottschalk G."/>
            <person name="Carniel E."/>
            <person name="Hacker J."/>
        </authorList>
    </citation>
    <scope>NUCLEOTIDE SEQUENCE [LARGE SCALE GENOMIC DNA]</scope>
    <source>
        <strain>536 / UPEC</strain>
    </source>
</reference>
<keyword id="KW-0436">Ligase</keyword>
<proteinExistence type="inferred from homology"/>
<feature type="chain" id="PRO_0000298681" description="Crotonobetaine/carnitine--CoA ligase">
    <location>
        <begin position="1"/>
        <end position="517"/>
    </location>
</feature>
<protein>
    <recommendedName>
        <fullName evidence="1">Crotonobetaine/carnitine--CoA ligase</fullName>
        <ecNumber evidence="1">6.2.1.48</ecNumber>
    </recommendedName>
</protein>
<gene>
    <name evidence="1" type="primary">caiC</name>
    <name type="ordered locus">ECP_0037</name>
</gene>
<name>CAIC_ECOL5</name>
<accession>Q0TLV2</accession>
<sequence>MDIIGGQHLRQMWDDLADVYGHKTALICESSSGVVNRYSYLELNQEINRTANLFYTLGIRKGDKVALHLDNCPEFIFCWFGLAKIGAIMVPINARLLREESTWILQNSQACLLVTSAQFYPMYQQIQQEDASQLRHICLTDMVLPADDGVSSFTQLKNQQPATLCYAPPLSTDDTAEILFTSGTTSRPKGVVITHYNLRFAGYYSAWQCALRDDDVYLTVMPAFHIDCQCTAAMAAFSAGATFVLVEKYSARAFWGQVQKYRATITECIPMMIRTLMVQPLSANDQQHRLREVMFYLNLSEQEKDAFCERFSVRLLTSYGMTETIVGIIGDRPGDKRRWPSIGRAGFCYEAEIRDDHNRPLPAGELGEICIKGVPGKTIFKEYFLNPKATAKVLEADGWLHTGDTGYRDEEGFFYFVDRRCNMIKRGGENVSCVELENIIATHPKIQDIVVVGIKDSIRDEAIKAFVVLNEGETLSEEEFFCFCEQNMAKFKVPSYLEIRKDLPRNCSGKIIRKNLK</sequence>
<dbReference type="EC" id="6.2.1.48" evidence="1"/>
<dbReference type="EMBL" id="CP000247">
    <property type="protein sequence ID" value="ABG68079.1"/>
    <property type="status" value="ALT_INIT"/>
    <property type="molecule type" value="Genomic_DNA"/>
</dbReference>
<dbReference type="RefSeq" id="WP_001298634.1">
    <property type="nucleotide sequence ID" value="NC_008253.1"/>
</dbReference>
<dbReference type="SMR" id="Q0TLV2"/>
<dbReference type="KEGG" id="ecp:ECP_0037"/>
<dbReference type="HOGENOM" id="CLU_000022_59_0_6"/>
<dbReference type="UniPathway" id="UPA00117"/>
<dbReference type="Proteomes" id="UP000009182">
    <property type="component" value="Chromosome"/>
</dbReference>
<dbReference type="GO" id="GO:0051108">
    <property type="term" value="F:carnitine-CoA ligase activity"/>
    <property type="evidence" value="ECO:0007669"/>
    <property type="project" value="InterPro"/>
</dbReference>
<dbReference type="GO" id="GO:0051109">
    <property type="term" value="F:crotonobetaine-CoA ligase activity"/>
    <property type="evidence" value="ECO:0007669"/>
    <property type="project" value="InterPro"/>
</dbReference>
<dbReference type="GO" id="GO:0031956">
    <property type="term" value="F:medium-chain fatty acid-CoA ligase activity"/>
    <property type="evidence" value="ECO:0007669"/>
    <property type="project" value="TreeGrafter"/>
</dbReference>
<dbReference type="GO" id="GO:0009437">
    <property type="term" value="P:carnitine metabolic process"/>
    <property type="evidence" value="ECO:0007669"/>
    <property type="project" value="UniProtKB-UniRule"/>
</dbReference>
<dbReference type="GO" id="GO:0006631">
    <property type="term" value="P:fatty acid metabolic process"/>
    <property type="evidence" value="ECO:0007669"/>
    <property type="project" value="TreeGrafter"/>
</dbReference>
<dbReference type="CDD" id="cd05934">
    <property type="entry name" value="FACL_DitJ_like"/>
    <property type="match status" value="1"/>
</dbReference>
<dbReference type="FunFam" id="3.30.300.30:FF:000011">
    <property type="entry name" value="Crotonobetaine/carnitine--CoA ligase"/>
    <property type="match status" value="1"/>
</dbReference>
<dbReference type="FunFam" id="3.40.50.12780:FF:000017">
    <property type="entry name" value="Crotonobetaine/carnitine--CoA ligase"/>
    <property type="match status" value="1"/>
</dbReference>
<dbReference type="Gene3D" id="3.30.300.30">
    <property type="match status" value="1"/>
</dbReference>
<dbReference type="Gene3D" id="3.40.50.12780">
    <property type="entry name" value="N-terminal domain of ligase-like"/>
    <property type="match status" value="1"/>
</dbReference>
<dbReference type="HAMAP" id="MF_01524">
    <property type="entry name" value="CaiC"/>
    <property type="match status" value="1"/>
</dbReference>
<dbReference type="InterPro" id="IPR025110">
    <property type="entry name" value="AMP-bd_C"/>
</dbReference>
<dbReference type="InterPro" id="IPR045851">
    <property type="entry name" value="AMP-bd_C_sf"/>
</dbReference>
<dbReference type="InterPro" id="IPR020845">
    <property type="entry name" value="AMP-binding_CS"/>
</dbReference>
<dbReference type="InterPro" id="IPR000873">
    <property type="entry name" value="AMP-dep_synth/lig_dom"/>
</dbReference>
<dbReference type="InterPro" id="IPR042099">
    <property type="entry name" value="ANL_N_sf"/>
</dbReference>
<dbReference type="InterPro" id="IPR023456">
    <property type="entry name" value="CaiC"/>
</dbReference>
<dbReference type="NCBIfam" id="NF005947">
    <property type="entry name" value="PRK08008.1"/>
    <property type="match status" value="1"/>
</dbReference>
<dbReference type="PANTHER" id="PTHR43201">
    <property type="entry name" value="ACYL-COA SYNTHETASE"/>
    <property type="match status" value="1"/>
</dbReference>
<dbReference type="PANTHER" id="PTHR43201:SF5">
    <property type="entry name" value="MEDIUM-CHAIN ACYL-COA LIGASE ACSF2, MITOCHONDRIAL"/>
    <property type="match status" value="1"/>
</dbReference>
<dbReference type="Pfam" id="PF00501">
    <property type="entry name" value="AMP-binding"/>
    <property type="match status" value="1"/>
</dbReference>
<dbReference type="Pfam" id="PF13193">
    <property type="entry name" value="AMP-binding_C"/>
    <property type="match status" value="1"/>
</dbReference>
<dbReference type="SUPFAM" id="SSF56801">
    <property type="entry name" value="Acetyl-CoA synthetase-like"/>
    <property type="match status" value="1"/>
</dbReference>
<dbReference type="PROSITE" id="PS00455">
    <property type="entry name" value="AMP_BINDING"/>
    <property type="match status" value="1"/>
</dbReference>
<comment type="function">
    <text evidence="1">Catalyzes the transfer of CoA to carnitine, generating the initial carnitinyl-CoA needed for the CaiB reaction cycle. Also has activity toward crotonobetaine and gamma-butyrobetaine.</text>
</comment>
<comment type="catalytic activity">
    <reaction evidence="1">
        <text>4-(trimethylamino)butanoate + ATP + CoA = 4-(trimethylamino)butanoyl-CoA + AMP + diphosphate</text>
        <dbReference type="Rhea" id="RHEA:55960"/>
        <dbReference type="ChEBI" id="CHEBI:16244"/>
        <dbReference type="ChEBI" id="CHEBI:30616"/>
        <dbReference type="ChEBI" id="CHEBI:33019"/>
        <dbReference type="ChEBI" id="CHEBI:57287"/>
        <dbReference type="ChEBI" id="CHEBI:61513"/>
        <dbReference type="ChEBI" id="CHEBI:456215"/>
        <dbReference type="EC" id="6.2.1.48"/>
    </reaction>
</comment>
<comment type="catalytic activity">
    <reaction evidence="1">
        <text>crotonobetaine + ATP + CoA = crotonobetainyl-CoA + AMP + diphosphate</text>
        <dbReference type="Rhea" id="RHEA:30079"/>
        <dbReference type="ChEBI" id="CHEBI:17237"/>
        <dbReference type="ChEBI" id="CHEBI:30616"/>
        <dbReference type="ChEBI" id="CHEBI:33019"/>
        <dbReference type="ChEBI" id="CHEBI:57287"/>
        <dbReference type="ChEBI" id="CHEBI:60933"/>
        <dbReference type="ChEBI" id="CHEBI:456215"/>
        <dbReference type="EC" id="6.2.1.48"/>
    </reaction>
</comment>
<comment type="catalytic activity">
    <reaction evidence="1">
        <text>(R)-carnitine + ATP + CoA = (R)-carnitinyl-CoA + AMP + diphosphate</text>
        <dbReference type="Rhea" id="RHEA:28514"/>
        <dbReference type="ChEBI" id="CHEBI:16347"/>
        <dbReference type="ChEBI" id="CHEBI:30616"/>
        <dbReference type="ChEBI" id="CHEBI:33019"/>
        <dbReference type="ChEBI" id="CHEBI:57287"/>
        <dbReference type="ChEBI" id="CHEBI:60932"/>
        <dbReference type="ChEBI" id="CHEBI:456215"/>
        <dbReference type="EC" id="6.2.1.48"/>
    </reaction>
</comment>
<comment type="pathway">
    <text evidence="1">Amine and polyamine metabolism; carnitine metabolism.</text>
</comment>
<comment type="similarity">
    <text evidence="1">Belongs to the ATP-dependent AMP-binding enzyme family.</text>
</comment>
<comment type="sequence caution" evidence="2">
    <conflict type="erroneous initiation">
        <sequence resource="EMBL-CDS" id="ABG68079"/>
    </conflict>
</comment>
<organism>
    <name type="scientific">Escherichia coli O6:K15:H31 (strain 536 / UPEC)</name>
    <dbReference type="NCBI Taxonomy" id="362663"/>
    <lineage>
        <taxon>Bacteria</taxon>
        <taxon>Pseudomonadati</taxon>
        <taxon>Pseudomonadota</taxon>
        <taxon>Gammaproteobacteria</taxon>
        <taxon>Enterobacterales</taxon>
        <taxon>Enterobacteriaceae</taxon>
        <taxon>Escherichia</taxon>
    </lineage>
</organism>